<feature type="chain" id="PRO_0000325736" description="Photosystem II reaction center protein M">
    <location>
        <begin position="1"/>
        <end position="34"/>
    </location>
</feature>
<feature type="transmembrane region" description="Helical" evidence="1">
    <location>
        <begin position="5"/>
        <end position="25"/>
    </location>
</feature>
<organism>
    <name type="scientific">Illicium oligandrum</name>
    <name type="common">Star anise</name>
    <dbReference type="NCBI Taxonomy" id="145286"/>
    <lineage>
        <taxon>Eukaryota</taxon>
        <taxon>Viridiplantae</taxon>
        <taxon>Streptophyta</taxon>
        <taxon>Embryophyta</taxon>
        <taxon>Tracheophyta</taxon>
        <taxon>Spermatophyta</taxon>
        <taxon>Magnoliopsida</taxon>
        <taxon>Austrobaileyales</taxon>
        <taxon>Schisandraceae</taxon>
        <taxon>Illicium</taxon>
    </lineage>
</organism>
<sequence>MEVNILAFIATALFILVPTAFLLIIYVKTVSQND</sequence>
<accession>A6MMT8</accession>
<evidence type="ECO:0000255" key="1">
    <source>
        <dbReference type="HAMAP-Rule" id="MF_00438"/>
    </source>
</evidence>
<gene>
    <name evidence="1" type="primary">psbM</name>
</gene>
<comment type="function">
    <text evidence="1">One of the components of the core complex of photosystem II (PSII). PSII is a light-driven water:plastoquinone oxidoreductase that uses light energy to abstract electrons from H(2)O, generating O(2) and a proton gradient subsequently used for ATP formation. It consists of a core antenna complex that captures photons, and an electron transfer chain that converts photonic excitation into a charge separation. This subunit is found at the monomer-monomer interface.</text>
</comment>
<comment type="subunit">
    <text evidence="1">PSII is composed of 1 copy each of membrane proteins PsbA, PsbB, PsbC, PsbD, PsbE, PsbF, PsbH, PsbI, PsbJ, PsbK, PsbL, PsbM, PsbT, PsbX, PsbY, PsbZ, Psb30/Ycf12, at least 3 peripheral proteins of the oxygen-evolving complex and a large number of cofactors. It forms dimeric complexes.</text>
</comment>
<comment type="subcellular location">
    <subcellularLocation>
        <location evidence="1">Plastid</location>
        <location evidence="1">Chloroplast thylakoid membrane</location>
        <topology evidence="1">Single-pass membrane protein</topology>
    </subcellularLocation>
</comment>
<comment type="similarity">
    <text evidence="1">Belongs to the PsbM family.</text>
</comment>
<protein>
    <recommendedName>
        <fullName evidence="1">Photosystem II reaction center protein M</fullName>
        <shortName evidence="1">PSII-M</shortName>
    </recommendedName>
</protein>
<keyword id="KW-0150">Chloroplast</keyword>
<keyword id="KW-0472">Membrane</keyword>
<keyword id="KW-0602">Photosynthesis</keyword>
<keyword id="KW-0604">Photosystem II</keyword>
<keyword id="KW-0934">Plastid</keyword>
<keyword id="KW-0674">Reaction center</keyword>
<keyword id="KW-0793">Thylakoid</keyword>
<keyword id="KW-0812">Transmembrane</keyword>
<keyword id="KW-1133">Transmembrane helix</keyword>
<geneLocation type="chloroplast"/>
<name>PSBM_ILLOL</name>
<proteinExistence type="inferred from homology"/>
<dbReference type="EMBL" id="EF380354">
    <property type="protein sequence ID" value="ABQ52513.1"/>
    <property type="molecule type" value="Genomic_DNA"/>
</dbReference>
<dbReference type="RefSeq" id="YP_001294264.1">
    <property type="nucleotide sequence ID" value="NC_009600.1"/>
</dbReference>
<dbReference type="SMR" id="A6MMT8"/>
<dbReference type="GeneID" id="5236752"/>
<dbReference type="GO" id="GO:0009535">
    <property type="term" value="C:chloroplast thylakoid membrane"/>
    <property type="evidence" value="ECO:0007669"/>
    <property type="project" value="UniProtKB-SubCell"/>
</dbReference>
<dbReference type="GO" id="GO:0009523">
    <property type="term" value="C:photosystem II"/>
    <property type="evidence" value="ECO:0007669"/>
    <property type="project" value="UniProtKB-KW"/>
</dbReference>
<dbReference type="GO" id="GO:0019684">
    <property type="term" value="P:photosynthesis, light reaction"/>
    <property type="evidence" value="ECO:0007669"/>
    <property type="project" value="InterPro"/>
</dbReference>
<dbReference type="HAMAP" id="MF_00438">
    <property type="entry name" value="PSII_PsbM"/>
    <property type="match status" value="1"/>
</dbReference>
<dbReference type="InterPro" id="IPR007826">
    <property type="entry name" value="PSII_PsbM"/>
</dbReference>
<dbReference type="InterPro" id="IPR037269">
    <property type="entry name" value="PSII_PsbM_sf"/>
</dbReference>
<dbReference type="NCBIfam" id="TIGR03038">
    <property type="entry name" value="PS_II_psbM"/>
    <property type="match status" value="1"/>
</dbReference>
<dbReference type="PANTHER" id="PTHR35774">
    <property type="entry name" value="PHOTOSYSTEM II REACTION CENTER PROTEIN M"/>
    <property type="match status" value="1"/>
</dbReference>
<dbReference type="PANTHER" id="PTHR35774:SF1">
    <property type="entry name" value="PHOTOSYSTEM II REACTION CENTER PROTEIN M"/>
    <property type="match status" value="1"/>
</dbReference>
<dbReference type="Pfam" id="PF05151">
    <property type="entry name" value="PsbM"/>
    <property type="match status" value="1"/>
</dbReference>
<dbReference type="SUPFAM" id="SSF161033">
    <property type="entry name" value="Photosystem II reaction center protein M, PsbM"/>
    <property type="match status" value="1"/>
</dbReference>
<reference key="1">
    <citation type="journal article" date="2007" name="Mol. Phylogenet. Evol.">
        <title>Phylogenetic and evolutionary implications of complete chloroplast genome sequences of four early-diverging angiosperms: Buxus (Buxaceae), Chloranthus (Chloranthaceae), Dioscorea (Dioscoreaceae), and Illicium (Schisandraceae).</title>
        <authorList>
            <person name="Hansen D.R."/>
            <person name="Dastidar S.G."/>
            <person name="Cai Z."/>
            <person name="Penaflor C."/>
            <person name="Kuehl J.V."/>
            <person name="Boore J.L."/>
            <person name="Jansen R.K."/>
        </authorList>
    </citation>
    <scope>NUCLEOTIDE SEQUENCE [LARGE SCALE GENOMIC DNA]</scope>
</reference>